<proteinExistence type="inferred from homology"/>
<evidence type="ECO:0000250" key="1"/>
<evidence type="ECO:0000255" key="2">
    <source>
        <dbReference type="HAMAP-Rule" id="MF_01344"/>
    </source>
</evidence>
<organism>
    <name type="scientific">Pinus thunbergii</name>
    <name type="common">Japanese black pine</name>
    <name type="synonym">Pinus thunbergiana</name>
    <dbReference type="NCBI Taxonomy" id="3350"/>
    <lineage>
        <taxon>Eukaryota</taxon>
        <taxon>Viridiplantae</taxon>
        <taxon>Streptophyta</taxon>
        <taxon>Embryophyta</taxon>
        <taxon>Tracheophyta</taxon>
        <taxon>Spermatophyta</taxon>
        <taxon>Pinopsida</taxon>
        <taxon>Pinidae</taxon>
        <taxon>Conifers I</taxon>
        <taxon>Pinales</taxon>
        <taxon>Pinaceae</taxon>
        <taxon>Pinus</taxon>
        <taxon>Pinus subgen. Pinus</taxon>
    </lineage>
</organism>
<protein>
    <recommendedName>
        <fullName evidence="2">Cytochrome b6-f complex subunit 4</fullName>
    </recommendedName>
    <alternativeName>
        <fullName evidence="2">17 kDa polypeptide</fullName>
    </alternativeName>
</protein>
<geneLocation type="chloroplast"/>
<gene>
    <name evidence="2" type="primary">petD</name>
</gene>
<keyword id="KW-0150">Chloroplast</keyword>
<keyword id="KW-0249">Electron transport</keyword>
<keyword id="KW-0472">Membrane</keyword>
<keyword id="KW-0602">Photosynthesis</keyword>
<keyword id="KW-0934">Plastid</keyword>
<keyword id="KW-0793">Thylakoid</keyword>
<keyword id="KW-0812">Transmembrane</keyword>
<keyword id="KW-1133">Transmembrane helix</keyword>
<keyword id="KW-0813">Transport</keyword>
<dbReference type="EMBL" id="D17510">
    <property type="protein sequence ID" value="BAA04392.1"/>
    <property type="molecule type" value="Genomic_DNA"/>
</dbReference>
<dbReference type="PIR" id="T07514">
    <property type="entry name" value="T07514"/>
</dbReference>
<dbReference type="RefSeq" id="NP_042435.1">
    <property type="nucleotide sequence ID" value="NC_001631.1"/>
</dbReference>
<dbReference type="SMR" id="P52770"/>
<dbReference type="GeneID" id="809032"/>
<dbReference type="GO" id="GO:0009535">
    <property type="term" value="C:chloroplast thylakoid membrane"/>
    <property type="evidence" value="ECO:0007669"/>
    <property type="project" value="UniProtKB-SubCell"/>
</dbReference>
<dbReference type="GO" id="GO:0045158">
    <property type="term" value="F:electron transporter, transferring electrons within cytochrome b6/f complex of photosystem II activity"/>
    <property type="evidence" value="ECO:0007669"/>
    <property type="project" value="UniProtKB-UniRule"/>
</dbReference>
<dbReference type="GO" id="GO:0045156">
    <property type="term" value="F:electron transporter, transferring electrons within the cyclic electron transport pathway of photosynthesis activity"/>
    <property type="evidence" value="ECO:0007669"/>
    <property type="project" value="InterPro"/>
</dbReference>
<dbReference type="GO" id="GO:0016491">
    <property type="term" value="F:oxidoreductase activity"/>
    <property type="evidence" value="ECO:0007669"/>
    <property type="project" value="InterPro"/>
</dbReference>
<dbReference type="GO" id="GO:0009767">
    <property type="term" value="P:photosynthetic electron transport chain"/>
    <property type="evidence" value="ECO:0007669"/>
    <property type="project" value="InterPro"/>
</dbReference>
<dbReference type="CDD" id="cd00290">
    <property type="entry name" value="cytochrome_b_C"/>
    <property type="match status" value="1"/>
</dbReference>
<dbReference type="FunFam" id="1.10.287.980:FF:000001">
    <property type="entry name" value="Cytochrome b6-f complex subunit 4"/>
    <property type="match status" value="1"/>
</dbReference>
<dbReference type="FunFam" id="1.20.5.510:FF:000002">
    <property type="entry name" value="Cytochrome b6-f complex subunit 4"/>
    <property type="match status" value="1"/>
</dbReference>
<dbReference type="Gene3D" id="1.10.287.980">
    <property type="entry name" value="plastocyanin oxidoreductase"/>
    <property type="match status" value="1"/>
</dbReference>
<dbReference type="Gene3D" id="1.20.5.510">
    <property type="entry name" value="Single helix bin"/>
    <property type="match status" value="1"/>
</dbReference>
<dbReference type="HAMAP" id="MF_01344">
    <property type="entry name" value="Cytb6_f_subIV"/>
    <property type="match status" value="1"/>
</dbReference>
<dbReference type="InterPro" id="IPR005798">
    <property type="entry name" value="Cyt_b/b6_C"/>
</dbReference>
<dbReference type="InterPro" id="IPR036150">
    <property type="entry name" value="Cyt_b/b6_C_sf"/>
</dbReference>
<dbReference type="InterPro" id="IPR005870">
    <property type="entry name" value="Cyt_b6/f_cplx_suIV"/>
</dbReference>
<dbReference type="InterPro" id="IPR048260">
    <property type="entry name" value="Cytochrome_b_C_euk/bac"/>
</dbReference>
<dbReference type="NCBIfam" id="TIGR01156">
    <property type="entry name" value="cytb6_f_IV"/>
    <property type="match status" value="1"/>
</dbReference>
<dbReference type="PANTHER" id="PTHR19271">
    <property type="entry name" value="CYTOCHROME B"/>
    <property type="match status" value="1"/>
</dbReference>
<dbReference type="PANTHER" id="PTHR19271:SF40">
    <property type="entry name" value="CYTOCHROME B"/>
    <property type="match status" value="1"/>
</dbReference>
<dbReference type="Pfam" id="PF00032">
    <property type="entry name" value="Cytochrom_B_C"/>
    <property type="match status" value="1"/>
</dbReference>
<dbReference type="PIRSF" id="PIRSF000033">
    <property type="entry name" value="B6f_17K"/>
    <property type="match status" value="1"/>
</dbReference>
<dbReference type="SUPFAM" id="SSF81648">
    <property type="entry name" value="a domain/subunit of cytochrome bc1 complex (Ubiquinol-cytochrome c reductase)"/>
    <property type="match status" value="1"/>
</dbReference>
<dbReference type="PROSITE" id="PS51003">
    <property type="entry name" value="CYTB_CTER"/>
    <property type="match status" value="1"/>
</dbReference>
<comment type="function">
    <text evidence="2">Component of the cytochrome b6-f complex, which mediates electron transfer between photosystem II (PSII) and photosystem I (PSI), cyclic electron flow around PSI, and state transitions.</text>
</comment>
<comment type="subunit">
    <text evidence="1">The 4 large subunits of the cytochrome b6-f complex are cytochrome b6, subunit IV (17 kDa polypeptide, petD), cytochrome f and the Rieske protein, while the 4 small subunits are petG, petL, petM and petN. The complex functions as a dimer (By similarity).</text>
</comment>
<comment type="subcellular location">
    <subcellularLocation>
        <location evidence="2">Plastid</location>
        <location evidence="2">Chloroplast thylakoid membrane</location>
        <topology evidence="2">Multi-pass membrane protein</topology>
    </subcellularLocation>
</comment>
<comment type="similarity">
    <text evidence="2">Belongs to the cytochrome b family. PetD subfamily.</text>
</comment>
<feature type="chain" id="PRO_0000061884" description="Cytochrome b6-f complex subunit 4">
    <location>
        <begin position="1"/>
        <end position="180"/>
    </location>
</feature>
<feature type="transmembrane region" description="Helical" evidence="2">
    <location>
        <begin position="36"/>
        <end position="56"/>
    </location>
</feature>
<feature type="transmembrane region" description="Helical" evidence="2">
    <location>
        <begin position="95"/>
        <end position="115"/>
    </location>
</feature>
<feature type="transmembrane region" description="Helical" evidence="2">
    <location>
        <begin position="131"/>
        <end position="151"/>
    </location>
</feature>
<accession>P52770</accession>
<reference key="1">
    <citation type="journal article" date="1994" name="Proc. Natl. Acad. Sci. U.S.A.">
        <title>Loss of all ndh genes as determined by sequencing the entire chloroplast genome of the black pine Pinus thunbergii.</title>
        <authorList>
            <person name="Wakasugi T."/>
            <person name="Tsudzuki J."/>
            <person name="Ito S."/>
            <person name="Nakashima K."/>
            <person name="Tsudzuki T."/>
            <person name="Sugiura M."/>
        </authorList>
    </citation>
    <scope>NUCLEOTIDE SEQUENCE [LARGE SCALE GENOMIC DNA]</scope>
</reference>
<sequence>MGVTKKPDLNDPVLRAKLAKGMGHNYYGEPAWPNDLSYIFPVVILGTIACTIGLAVLEPSMIGEPANPFATPLEILPEWYFFPVFQILRTVPNKLLGVLLMGSVPAGSLTVPFLENVNQFQNPFRRPVATTVSLIGTAVALWLGIGAALPIDESLTLGLFQSNLIQLSNIKIFQFFYSYI</sequence>
<name>PETD_PINTH</name>